<protein>
    <recommendedName>
        <fullName>Contactin-associated protein-like 5</fullName>
    </recommendedName>
    <alternativeName>
        <fullName>Cell recognition molecule Caspr5</fullName>
    </alternativeName>
</protein>
<organism>
    <name type="scientific">Canis lupus familiaris</name>
    <name type="common">Dog</name>
    <name type="synonym">Canis familiaris</name>
    <dbReference type="NCBI Taxonomy" id="9615"/>
    <lineage>
        <taxon>Eukaryota</taxon>
        <taxon>Metazoa</taxon>
        <taxon>Chordata</taxon>
        <taxon>Craniata</taxon>
        <taxon>Vertebrata</taxon>
        <taxon>Euteleostomi</taxon>
        <taxon>Mammalia</taxon>
        <taxon>Eutheria</taxon>
        <taxon>Laurasiatheria</taxon>
        <taxon>Carnivora</taxon>
        <taxon>Caniformia</taxon>
        <taxon>Canidae</taxon>
        <taxon>Canis</taxon>
    </lineage>
</organism>
<dbReference type="EMBL" id="AAEX02006971">
    <property type="status" value="NOT_ANNOTATED_CDS"/>
    <property type="molecule type" value="Genomic_DNA"/>
</dbReference>
<dbReference type="EMBL" id="AAEX02006972">
    <property type="status" value="NOT_ANNOTATED_CDS"/>
    <property type="molecule type" value="Genomic_DNA"/>
</dbReference>
<dbReference type="EMBL" id="AAEX02006973">
    <property type="status" value="NOT_ANNOTATED_CDS"/>
    <property type="molecule type" value="Genomic_DNA"/>
</dbReference>
<dbReference type="EMBL" id="AAEX02006974">
    <property type="status" value="NOT_ANNOTATED_CDS"/>
    <property type="molecule type" value="Genomic_DNA"/>
</dbReference>
<dbReference type="EMBL" id="AAEX02006975">
    <property type="status" value="NOT_ANNOTATED_CDS"/>
    <property type="molecule type" value="Genomic_DNA"/>
</dbReference>
<dbReference type="EMBL" id="AAEX02006976">
    <property type="status" value="NOT_ANNOTATED_CDS"/>
    <property type="molecule type" value="Genomic_DNA"/>
</dbReference>
<dbReference type="EMBL" id="AAEX02006977">
    <property type="status" value="NOT_ANNOTATED_CDS"/>
    <property type="molecule type" value="Genomic_DNA"/>
</dbReference>
<dbReference type="EMBL" id="BN000917">
    <property type="protein sequence ID" value="CAJ77882.1"/>
    <property type="molecule type" value="mRNA"/>
</dbReference>
<dbReference type="RefSeq" id="NP_001041573.1">
    <property type="nucleotide sequence ID" value="NM_001048108.1"/>
</dbReference>
<dbReference type="SMR" id="Q0V8T0"/>
<dbReference type="FunCoup" id="Q0V8T0">
    <property type="interactions" value="299"/>
</dbReference>
<dbReference type="STRING" id="9615.ENSCAFP00000006992"/>
<dbReference type="GlyCosmos" id="Q0V8T0">
    <property type="glycosylation" value="4 sites, No reported glycans"/>
</dbReference>
<dbReference type="PaxDb" id="9612-ENSCAFP00000006992"/>
<dbReference type="GeneID" id="483874"/>
<dbReference type="KEGG" id="cfa:483874"/>
<dbReference type="CTD" id="129684"/>
<dbReference type="eggNOG" id="KOG3516">
    <property type="taxonomic scope" value="Eukaryota"/>
</dbReference>
<dbReference type="InParanoid" id="Q0V8T0"/>
<dbReference type="OrthoDB" id="26719at2759"/>
<dbReference type="Proteomes" id="UP000002254">
    <property type="component" value="Unplaced"/>
</dbReference>
<dbReference type="Proteomes" id="UP000694429">
    <property type="component" value="Unplaced"/>
</dbReference>
<dbReference type="Proteomes" id="UP000694542">
    <property type="component" value="Unplaced"/>
</dbReference>
<dbReference type="Proteomes" id="UP000805418">
    <property type="component" value="Unplaced"/>
</dbReference>
<dbReference type="GO" id="GO:0016020">
    <property type="term" value="C:membrane"/>
    <property type="evidence" value="ECO:0007669"/>
    <property type="project" value="UniProtKB-SubCell"/>
</dbReference>
<dbReference type="CDD" id="cd00054">
    <property type="entry name" value="EGF_CA"/>
    <property type="match status" value="1"/>
</dbReference>
<dbReference type="CDD" id="cd00057">
    <property type="entry name" value="FA58C"/>
    <property type="match status" value="1"/>
</dbReference>
<dbReference type="CDD" id="cd00110">
    <property type="entry name" value="LamG"/>
    <property type="match status" value="4"/>
</dbReference>
<dbReference type="FunFam" id="2.60.120.1000:FF:000005">
    <property type="entry name" value="Contactin associated protein-like 2"/>
    <property type="match status" value="1"/>
</dbReference>
<dbReference type="FunFam" id="2.60.120.260:FF:000016">
    <property type="entry name" value="Contactin-associated protein-like 4 isoform 1"/>
    <property type="match status" value="1"/>
</dbReference>
<dbReference type="FunFam" id="2.60.120.200:FF:000026">
    <property type="entry name" value="contactin-associated protein-like 4 isoform X1"/>
    <property type="match status" value="1"/>
</dbReference>
<dbReference type="Gene3D" id="2.60.120.1000">
    <property type="match status" value="1"/>
</dbReference>
<dbReference type="Gene3D" id="2.60.120.200">
    <property type="match status" value="4"/>
</dbReference>
<dbReference type="Gene3D" id="2.60.120.260">
    <property type="entry name" value="Galactose-binding domain-like"/>
    <property type="match status" value="1"/>
</dbReference>
<dbReference type="Gene3D" id="2.10.25.10">
    <property type="entry name" value="Laminin"/>
    <property type="match status" value="1"/>
</dbReference>
<dbReference type="InterPro" id="IPR013320">
    <property type="entry name" value="ConA-like_dom_sf"/>
</dbReference>
<dbReference type="InterPro" id="IPR000742">
    <property type="entry name" value="EGF-like_dom"/>
</dbReference>
<dbReference type="InterPro" id="IPR000421">
    <property type="entry name" value="FA58C"/>
</dbReference>
<dbReference type="InterPro" id="IPR036056">
    <property type="entry name" value="Fibrinogen-like_C"/>
</dbReference>
<dbReference type="InterPro" id="IPR002181">
    <property type="entry name" value="Fibrinogen_a/b/g_C_dom"/>
</dbReference>
<dbReference type="InterPro" id="IPR008979">
    <property type="entry name" value="Galactose-bd-like_sf"/>
</dbReference>
<dbReference type="InterPro" id="IPR001791">
    <property type="entry name" value="Laminin_G"/>
</dbReference>
<dbReference type="InterPro" id="IPR050372">
    <property type="entry name" value="Neurexin-related_CASP"/>
</dbReference>
<dbReference type="PANTHER" id="PTHR15036:SF46">
    <property type="entry name" value="CONTACTIN-ASSOCIATED PROTEIN-LIKE 5"/>
    <property type="match status" value="1"/>
</dbReference>
<dbReference type="PANTHER" id="PTHR15036">
    <property type="entry name" value="PIKACHURIN-LIKE PROTEIN"/>
    <property type="match status" value="1"/>
</dbReference>
<dbReference type="Pfam" id="PF00008">
    <property type="entry name" value="EGF"/>
    <property type="match status" value="1"/>
</dbReference>
<dbReference type="Pfam" id="PF00754">
    <property type="entry name" value="F5_F8_type_C"/>
    <property type="match status" value="1"/>
</dbReference>
<dbReference type="Pfam" id="PF02210">
    <property type="entry name" value="Laminin_G_2"/>
    <property type="match status" value="4"/>
</dbReference>
<dbReference type="SMART" id="SM00181">
    <property type="entry name" value="EGF"/>
    <property type="match status" value="2"/>
</dbReference>
<dbReference type="SMART" id="SM00231">
    <property type="entry name" value="FA58C"/>
    <property type="match status" value="1"/>
</dbReference>
<dbReference type="SMART" id="SM00282">
    <property type="entry name" value="LamG"/>
    <property type="match status" value="4"/>
</dbReference>
<dbReference type="SUPFAM" id="SSF49899">
    <property type="entry name" value="Concanavalin A-like lectins/glucanases"/>
    <property type="match status" value="4"/>
</dbReference>
<dbReference type="SUPFAM" id="SSF57196">
    <property type="entry name" value="EGF/Laminin"/>
    <property type="match status" value="1"/>
</dbReference>
<dbReference type="SUPFAM" id="SSF56496">
    <property type="entry name" value="Fibrinogen C-terminal domain-like"/>
    <property type="match status" value="1"/>
</dbReference>
<dbReference type="SUPFAM" id="SSF49785">
    <property type="entry name" value="Galactose-binding domain-like"/>
    <property type="match status" value="1"/>
</dbReference>
<dbReference type="PROSITE" id="PS50026">
    <property type="entry name" value="EGF_3"/>
    <property type="match status" value="2"/>
</dbReference>
<dbReference type="PROSITE" id="PS01286">
    <property type="entry name" value="FA58C_2"/>
    <property type="match status" value="1"/>
</dbReference>
<dbReference type="PROSITE" id="PS50022">
    <property type="entry name" value="FA58C_3"/>
    <property type="match status" value="1"/>
</dbReference>
<dbReference type="PROSITE" id="PS51406">
    <property type="entry name" value="FIBRINOGEN_C_2"/>
    <property type="match status" value="1"/>
</dbReference>
<dbReference type="PROSITE" id="PS50025">
    <property type="entry name" value="LAM_G_DOMAIN"/>
    <property type="match status" value="4"/>
</dbReference>
<name>CNTP5_CANLF</name>
<evidence type="ECO:0000250" key="1"/>
<evidence type="ECO:0000255" key="2"/>
<evidence type="ECO:0000255" key="3">
    <source>
        <dbReference type="PROSITE-ProRule" id="PRU00076"/>
    </source>
</evidence>
<evidence type="ECO:0000255" key="4">
    <source>
        <dbReference type="PROSITE-ProRule" id="PRU00081"/>
    </source>
</evidence>
<evidence type="ECO:0000255" key="5">
    <source>
        <dbReference type="PROSITE-ProRule" id="PRU00122"/>
    </source>
</evidence>
<evidence type="ECO:0000255" key="6">
    <source>
        <dbReference type="PROSITE-ProRule" id="PRU00739"/>
    </source>
</evidence>
<evidence type="ECO:0000305" key="7"/>
<sequence length="1305" mass="145560">MDSVPRLTGVFTLLLSGLWHLGSSATNYNCDDPLASLLSPMAFSSSSDLTGTHSPAQLNRRVGTGGWSPADSNAQQWLQMDLGNRVEITAVATQGRYGSSDWVTSYSLMFSDTGRNWKQYKQEDSIWTFAGNMNADSVMHHKLLHSVRARFVRFVPLEWNPSGKIGMRVEVYGCSYKSDVADFDGRSSLLYRFNQKLMSTLKDVISLKFKSMQGDGVLFHGEGQRGDHITLELQKGRLALHLNLDDSKPRLSSSPPSVTLGSLLDDQQWHSVLIERVGKQVNFSVDKHTQHFRTKGEADALDIDYELSFGGIPVPGKPGTFLKKNFHGCIENLYYNGVNIIDLAKRRKHQIYTGNVTFSCSEPQIVPITFVNSSSSYLLLPGTPQIDGLSVSFQFRTWNKDGLLLSTELSEGSGTLLLSLEGGTVRLVIQKMTERTAEILTGSSLNDGLWHSVSINARRDRITLSLDNDAASPAQDTTRVQIYSGNSYYFGGCPDNLTDSQCLNPIKAFQGCMRLIFIDNQPKDLISVQQGSLGNFSDLHIDLCSIKDRCLPNYCEHGGFCSQSWTTFYCNCSNTGYTGATCHNSLYEQSCEVYRHQGNTAGFFYIDSDGSGPLGPLQVYCNITEDKIWTSVQHNNTELTHVRGANPEKPYTMALDYGGSMEQLEAMIDSSEHCEQEVAYHCRRSRLLNTPDGTPFTWWIGRSNEKHPYWGGAPPGVQQCECGLDESCLDVRHFCNCDADKDEWTNDTGFLSFKDHLPVTQIVITDTNRSNSEAAWRIGPLRCYGDRHFWNAVSFYTEASYLHFPTFHAEFSADISFFFKTTALSGVFLENLGIKDFIRLEISSPSEITFAIDVGNGPVELIVHSPSLLNDNQWHYIRAERNLKETSLQVDSLPRMTRETSEEGHFRLQLNSQLFVGGTSSRQKGFLGCIRSLHLNGQKLDLEERAKVTSGVRPGCPGHCSTYGSICHNGGKCVEKYSGYFCDCTNSPYEGPFCKKEVSAVFEAGTSVTYMFQEPYPVTKNISLSSSAIYADAAPSKENIAFSFVTAQAPSLLLYINSSQDYLAVLLCKNGSLQVRYQLSKEETQVFNIDAENFANRRMHHLKINREGRELAIQVDHQLRLSYNFSSEVEFRAIRSLTLGKVREHLGLDSEIAKANTLGFVGCLSSVQYNQVAPLKAALRHATIAPVTVQGTLMESSCGSMVDVDVNTVTTVHSSSDPFGKTDEREPLTNAVRSDSAVIGGVIAVVIFIIFSIIGIMTRFLYQHKQSHRTNQMKEKEYPENLDSSFRNDIDLQNTVSECKREYFI</sequence>
<proteinExistence type="evidence at transcript level"/>
<keyword id="KW-1015">Disulfide bond</keyword>
<keyword id="KW-0245">EGF-like domain</keyword>
<keyword id="KW-0325">Glycoprotein</keyword>
<keyword id="KW-0472">Membrane</keyword>
<keyword id="KW-1185">Reference proteome</keyword>
<keyword id="KW-0677">Repeat</keyword>
<keyword id="KW-0732">Signal</keyword>
<keyword id="KW-0812">Transmembrane</keyword>
<keyword id="KW-1133">Transmembrane helix</keyword>
<gene>
    <name type="primary">CNTNAP5</name>
    <name type="synonym">CASPR5</name>
</gene>
<reference key="1">
    <citation type="journal article" date="2005" name="Nature">
        <title>Genome sequence, comparative analysis and haplotype structure of the domestic dog.</title>
        <authorList>
            <person name="Lindblad-Toh K."/>
            <person name="Wade C.M."/>
            <person name="Mikkelsen T.S."/>
            <person name="Karlsson E.K."/>
            <person name="Jaffe D.B."/>
            <person name="Kamal M."/>
            <person name="Clamp M."/>
            <person name="Chang J.L."/>
            <person name="Kulbokas E.J. III"/>
            <person name="Zody M.C."/>
            <person name="Mauceli E."/>
            <person name="Xie X."/>
            <person name="Breen M."/>
            <person name="Wayne R.K."/>
            <person name="Ostrander E.A."/>
            <person name="Ponting C.P."/>
            <person name="Galibert F."/>
            <person name="Smith D.R."/>
            <person name="deJong P.J."/>
            <person name="Kirkness E.F."/>
            <person name="Alvarez P."/>
            <person name="Biagi T."/>
            <person name="Brockman W."/>
            <person name="Butler J."/>
            <person name="Chin C.-W."/>
            <person name="Cook A."/>
            <person name="Cuff J."/>
            <person name="Daly M.J."/>
            <person name="DeCaprio D."/>
            <person name="Gnerre S."/>
            <person name="Grabherr M."/>
            <person name="Kellis M."/>
            <person name="Kleber M."/>
            <person name="Bardeleben C."/>
            <person name="Goodstadt L."/>
            <person name="Heger A."/>
            <person name="Hitte C."/>
            <person name="Kim L."/>
            <person name="Koepfli K.-P."/>
            <person name="Parker H.G."/>
            <person name="Pollinger J.P."/>
            <person name="Searle S.M.J."/>
            <person name="Sutter N.B."/>
            <person name="Thomas R."/>
            <person name="Webber C."/>
            <person name="Baldwin J."/>
            <person name="Abebe A."/>
            <person name="Abouelleil A."/>
            <person name="Aftuck L."/>
            <person name="Ait-Zahra M."/>
            <person name="Aldredge T."/>
            <person name="Allen N."/>
            <person name="An P."/>
            <person name="Anderson S."/>
            <person name="Antoine C."/>
            <person name="Arachchi H."/>
            <person name="Aslam A."/>
            <person name="Ayotte L."/>
            <person name="Bachantsang P."/>
            <person name="Barry A."/>
            <person name="Bayul T."/>
            <person name="Benamara M."/>
            <person name="Berlin A."/>
            <person name="Bessette D."/>
            <person name="Blitshteyn B."/>
            <person name="Bloom T."/>
            <person name="Blye J."/>
            <person name="Boguslavskiy L."/>
            <person name="Bonnet C."/>
            <person name="Boukhgalter B."/>
            <person name="Brown A."/>
            <person name="Cahill P."/>
            <person name="Calixte N."/>
            <person name="Camarata J."/>
            <person name="Cheshatsang Y."/>
            <person name="Chu J."/>
            <person name="Citroen M."/>
            <person name="Collymore A."/>
            <person name="Cooke P."/>
            <person name="Dawoe T."/>
            <person name="Daza R."/>
            <person name="Decktor K."/>
            <person name="DeGray S."/>
            <person name="Dhargay N."/>
            <person name="Dooley K."/>
            <person name="Dooley K."/>
            <person name="Dorje P."/>
            <person name="Dorjee K."/>
            <person name="Dorris L."/>
            <person name="Duffey N."/>
            <person name="Dupes A."/>
            <person name="Egbiremolen O."/>
            <person name="Elong R."/>
            <person name="Falk J."/>
            <person name="Farina A."/>
            <person name="Faro S."/>
            <person name="Ferguson D."/>
            <person name="Ferreira P."/>
            <person name="Fisher S."/>
            <person name="FitzGerald M."/>
            <person name="Foley K."/>
            <person name="Foley C."/>
            <person name="Franke A."/>
            <person name="Friedrich D."/>
            <person name="Gage D."/>
            <person name="Garber M."/>
            <person name="Gearin G."/>
            <person name="Giannoukos G."/>
            <person name="Goode T."/>
            <person name="Goyette A."/>
            <person name="Graham J."/>
            <person name="Grandbois E."/>
            <person name="Gyaltsen K."/>
            <person name="Hafez N."/>
            <person name="Hagopian D."/>
            <person name="Hagos B."/>
            <person name="Hall J."/>
            <person name="Healy C."/>
            <person name="Hegarty R."/>
            <person name="Honan T."/>
            <person name="Horn A."/>
            <person name="Houde N."/>
            <person name="Hughes L."/>
            <person name="Hunnicutt L."/>
            <person name="Husby M."/>
            <person name="Jester B."/>
            <person name="Jones C."/>
            <person name="Kamat A."/>
            <person name="Kanga B."/>
            <person name="Kells C."/>
            <person name="Khazanovich D."/>
            <person name="Kieu A.C."/>
            <person name="Kisner P."/>
            <person name="Kumar M."/>
            <person name="Lance K."/>
            <person name="Landers T."/>
            <person name="Lara M."/>
            <person name="Lee W."/>
            <person name="Leger J.-P."/>
            <person name="Lennon N."/>
            <person name="Leuper L."/>
            <person name="LeVine S."/>
            <person name="Liu J."/>
            <person name="Liu X."/>
            <person name="Lokyitsang Y."/>
            <person name="Lokyitsang T."/>
            <person name="Lui A."/>
            <person name="Macdonald J."/>
            <person name="Major J."/>
            <person name="Marabella R."/>
            <person name="Maru K."/>
            <person name="Matthews C."/>
            <person name="McDonough S."/>
            <person name="Mehta T."/>
            <person name="Meldrim J."/>
            <person name="Melnikov A."/>
            <person name="Meneus L."/>
            <person name="Mihalev A."/>
            <person name="Mihova T."/>
            <person name="Miller K."/>
            <person name="Mittelman R."/>
            <person name="Mlenga V."/>
            <person name="Mulrain L."/>
            <person name="Munson G."/>
            <person name="Navidi A."/>
            <person name="Naylor J."/>
            <person name="Nguyen T."/>
            <person name="Nguyen N."/>
            <person name="Nguyen C."/>
            <person name="Nguyen T."/>
            <person name="Nicol R."/>
            <person name="Norbu N."/>
            <person name="Norbu C."/>
            <person name="Novod N."/>
            <person name="Nyima T."/>
            <person name="Olandt P."/>
            <person name="O'Neill B."/>
            <person name="O'Neill K."/>
            <person name="Osman S."/>
            <person name="Oyono L."/>
            <person name="Patti C."/>
            <person name="Perrin D."/>
            <person name="Phunkhang P."/>
            <person name="Pierre F."/>
            <person name="Priest M."/>
            <person name="Rachupka A."/>
            <person name="Raghuraman S."/>
            <person name="Rameau R."/>
            <person name="Ray V."/>
            <person name="Raymond C."/>
            <person name="Rege F."/>
            <person name="Rise C."/>
            <person name="Rogers J."/>
            <person name="Rogov P."/>
            <person name="Sahalie J."/>
            <person name="Settipalli S."/>
            <person name="Sharpe T."/>
            <person name="Shea T."/>
            <person name="Sheehan M."/>
            <person name="Sherpa N."/>
            <person name="Shi J."/>
            <person name="Shih D."/>
            <person name="Sloan J."/>
            <person name="Smith C."/>
            <person name="Sparrow T."/>
            <person name="Stalker J."/>
            <person name="Stange-Thomann N."/>
            <person name="Stavropoulos S."/>
            <person name="Stone C."/>
            <person name="Stone S."/>
            <person name="Sykes S."/>
            <person name="Tchuinga P."/>
            <person name="Tenzing P."/>
            <person name="Tesfaye S."/>
            <person name="Thoulutsang D."/>
            <person name="Thoulutsang Y."/>
            <person name="Topham K."/>
            <person name="Topping I."/>
            <person name="Tsamla T."/>
            <person name="Vassiliev H."/>
            <person name="Venkataraman V."/>
            <person name="Vo A."/>
            <person name="Wangchuk T."/>
            <person name="Wangdi T."/>
            <person name="Weiand M."/>
            <person name="Wilkinson J."/>
            <person name="Wilson A."/>
            <person name="Yadav S."/>
            <person name="Yang S."/>
            <person name="Yang X."/>
            <person name="Young G."/>
            <person name="Yu Q."/>
            <person name="Zainoun J."/>
            <person name="Zembek L."/>
            <person name="Zimmer A."/>
            <person name="Lander E.S."/>
        </authorList>
    </citation>
    <scope>NUCLEOTIDE SEQUENCE [LARGE SCALE GENOMIC DNA]</scope>
    <source>
        <strain>Boxer</strain>
    </source>
</reference>
<reference key="2">
    <citation type="journal article" date="2006" name="Mamm. Genome">
        <title>New members of the neurexin superfamily: multiple rodent homologues of the human CASPR5 gene.</title>
        <authorList>
            <person name="Traut W."/>
            <person name="Weichenhan D."/>
            <person name="Himmelbauer H."/>
            <person name="Winking H."/>
        </authorList>
    </citation>
    <scope>IDENTIFICATION</scope>
</reference>
<comment type="function">
    <text>May play a role in the correct development and proper functioning of the peripheral and central nervous system and be involved in cell adhesion and intercellular communication.</text>
</comment>
<comment type="subcellular location">
    <subcellularLocation>
        <location evidence="7">Membrane</location>
        <topology evidence="7">Single-pass type I membrane protein</topology>
    </subcellularLocation>
</comment>
<comment type="similarity">
    <text evidence="7">Belongs to the neurexin family.</text>
</comment>
<feature type="signal peptide" evidence="2">
    <location>
        <begin position="1"/>
        <end position="24"/>
    </location>
</feature>
<feature type="chain" id="PRO_0000317376" description="Contactin-associated protein-like 5">
    <location>
        <begin position="25"/>
        <end position="1305"/>
    </location>
</feature>
<feature type="topological domain" description="Extracellular" evidence="2">
    <location>
        <begin position="25"/>
        <end position="1236"/>
    </location>
</feature>
<feature type="transmembrane region" description="Helical" evidence="2">
    <location>
        <begin position="1237"/>
        <end position="1257"/>
    </location>
</feature>
<feature type="topological domain" description="Cytoplasmic" evidence="2">
    <location>
        <begin position="1258"/>
        <end position="1305"/>
    </location>
</feature>
<feature type="domain" description="F5/8 type C" evidence="4">
    <location>
        <begin position="30"/>
        <end position="174"/>
    </location>
</feature>
<feature type="domain" description="Laminin G-like 1" evidence="5">
    <location>
        <begin position="180"/>
        <end position="360"/>
    </location>
</feature>
<feature type="domain" description="Laminin G-like 2" evidence="5">
    <location>
        <begin position="367"/>
        <end position="544"/>
    </location>
</feature>
<feature type="domain" description="EGF-like 1" evidence="3">
    <location>
        <begin position="546"/>
        <end position="583"/>
    </location>
</feature>
<feature type="domain" description="Fibrinogen C-terminal" evidence="6">
    <location>
        <begin position="584"/>
        <end position="790"/>
    </location>
</feature>
<feature type="domain" description="Laminin G-like 3" evidence="5">
    <location>
        <begin position="791"/>
        <end position="956"/>
    </location>
</feature>
<feature type="domain" description="EGF-like 2" evidence="3">
    <location>
        <begin position="957"/>
        <end position="995"/>
    </location>
</feature>
<feature type="domain" description="Laminin G-like 4" evidence="5">
    <location>
        <begin position="1000"/>
        <end position="1198"/>
    </location>
</feature>
<feature type="glycosylation site" description="N-linked (GlcNAc...) asparagine" evidence="2">
    <location>
        <position position="282"/>
    </location>
</feature>
<feature type="glycosylation site" description="N-linked (GlcNAc...) asparagine" evidence="2">
    <location>
        <position position="355"/>
    </location>
</feature>
<feature type="glycosylation site" description="N-linked (GlcNAc...) asparagine" evidence="2">
    <location>
        <position position="496"/>
    </location>
</feature>
<feature type="glycosylation site" description="N-linked (GlcNAc...) asparagine" evidence="2">
    <location>
        <position position="622"/>
    </location>
</feature>
<feature type="disulfide bond" evidence="1">
    <location>
        <begin position="30"/>
        <end position="174"/>
    </location>
</feature>
<feature type="disulfide bond" evidence="1">
    <location>
        <begin position="329"/>
        <end position="360"/>
    </location>
</feature>
<feature type="disulfide bond" evidence="1">
    <location>
        <begin position="512"/>
        <end position="544"/>
    </location>
</feature>
<feature type="disulfide bond" evidence="1">
    <location>
        <begin position="550"/>
        <end position="561"/>
    </location>
</feature>
<feature type="disulfide bond" evidence="1">
    <location>
        <begin position="555"/>
        <end position="570"/>
    </location>
</feature>
<feature type="disulfide bond" evidence="1">
    <location>
        <begin position="572"/>
        <end position="582"/>
    </location>
</feature>
<feature type="disulfide bond" evidence="1">
    <location>
        <begin position="929"/>
        <end position="956"/>
    </location>
</feature>
<feature type="disulfide bond" evidence="1">
    <location>
        <begin position="960"/>
        <end position="973"/>
    </location>
</feature>
<feature type="disulfide bond" evidence="1">
    <location>
        <begin position="967"/>
        <end position="982"/>
    </location>
</feature>
<feature type="disulfide bond" evidence="1">
    <location>
        <begin position="984"/>
        <end position="994"/>
    </location>
</feature>
<feature type="disulfide bond" evidence="1">
    <location>
        <begin position="1163"/>
        <end position="1198"/>
    </location>
</feature>
<accession>Q0V8T0</accession>